<reference key="1">
    <citation type="journal article" date="1999" name="J. Mol. Endocrinol.">
        <title>Molecular cloning, genomic organization and selective expression of bombesin receptor subtype 3 in the sheep hypothalamus and pituitary.</title>
        <authorList>
            <person name="Whitley J.C."/>
            <person name="Moore C."/>
            <person name="Giraud A.S."/>
            <person name="Shulkes A."/>
        </authorList>
    </citation>
    <scope>NUCLEOTIDE SEQUENCE [GENOMIC DNA / MRNA]</scope>
    <source>
        <tissue>Pituitary</tissue>
    </source>
</reference>
<evidence type="ECO:0000250" key="1"/>
<evidence type="ECO:0000255" key="2"/>
<evidence type="ECO:0000255" key="3">
    <source>
        <dbReference type="PROSITE-ProRule" id="PRU00521"/>
    </source>
</evidence>
<evidence type="ECO:0000256" key="4">
    <source>
        <dbReference type="SAM" id="MobiDB-lite"/>
    </source>
</evidence>
<keyword id="KW-1003">Cell membrane</keyword>
<keyword id="KW-1015">Disulfide bond</keyword>
<keyword id="KW-0297">G-protein coupled receptor</keyword>
<keyword id="KW-0325">Glycoprotein</keyword>
<keyword id="KW-0449">Lipoprotein</keyword>
<keyword id="KW-0472">Membrane</keyword>
<keyword id="KW-0564">Palmitate</keyword>
<keyword id="KW-0675">Receptor</keyword>
<keyword id="KW-1185">Reference proteome</keyword>
<keyword id="KW-0807">Transducer</keyword>
<keyword id="KW-0812">Transmembrane</keyword>
<keyword id="KW-1133">Transmembrane helix</keyword>
<dbReference type="EMBL" id="AF108210">
    <property type="protein sequence ID" value="AAD19642.1"/>
    <property type="molecule type" value="mRNA"/>
</dbReference>
<dbReference type="EMBL" id="AF108209">
    <property type="protein sequence ID" value="AAD19639.1"/>
    <property type="molecule type" value="Genomic_DNA"/>
</dbReference>
<dbReference type="EMBL" id="AF108207">
    <property type="protein sequence ID" value="AAD19639.1"/>
    <property type="status" value="JOINED"/>
    <property type="molecule type" value="Genomic_DNA"/>
</dbReference>
<dbReference type="EMBL" id="AF108208">
    <property type="protein sequence ID" value="AAD19639.1"/>
    <property type="status" value="JOINED"/>
    <property type="molecule type" value="Genomic_DNA"/>
</dbReference>
<dbReference type="RefSeq" id="NP_001009215.1">
    <property type="nucleotide sequence ID" value="NM_001009215.1"/>
</dbReference>
<dbReference type="SMR" id="O97967"/>
<dbReference type="STRING" id="9940.ENSOARP00000012091"/>
<dbReference type="GlyCosmos" id="O97967">
    <property type="glycosylation" value="3 sites, No reported glycans"/>
</dbReference>
<dbReference type="PaxDb" id="9940-ENSOARP00000012091"/>
<dbReference type="Ensembl" id="ENSOART00180052265">
    <property type="protein sequence ID" value="ENSOARP00180027286"/>
    <property type="gene ID" value="ENSOARG00180031357"/>
</dbReference>
<dbReference type="Ensembl" id="ENSOART00220075983">
    <property type="protein sequence ID" value="ENSOARP00220040808"/>
    <property type="gene ID" value="ENSOARG00220045736"/>
</dbReference>
<dbReference type="GeneID" id="443044"/>
<dbReference type="KEGG" id="oas:443044"/>
<dbReference type="CTD" id="680"/>
<dbReference type="eggNOG" id="KOG3656">
    <property type="taxonomic scope" value="Eukaryota"/>
</dbReference>
<dbReference type="OrthoDB" id="10049706at2759"/>
<dbReference type="Proteomes" id="UP000002356">
    <property type="component" value="Unplaced"/>
</dbReference>
<dbReference type="GO" id="GO:0005886">
    <property type="term" value="C:plasma membrane"/>
    <property type="evidence" value="ECO:0007669"/>
    <property type="project" value="UniProtKB-SubCell"/>
</dbReference>
<dbReference type="GO" id="GO:0004946">
    <property type="term" value="F:bombesin receptor activity"/>
    <property type="evidence" value="ECO:0007669"/>
    <property type="project" value="InterPro"/>
</dbReference>
<dbReference type="FunFam" id="1.20.1070.10:FF:000166">
    <property type="entry name" value="Bombesin receptor subtype-3"/>
    <property type="match status" value="1"/>
</dbReference>
<dbReference type="Gene3D" id="1.20.1070.10">
    <property type="entry name" value="Rhodopsin 7-helix transmembrane proteins"/>
    <property type="match status" value="1"/>
</dbReference>
<dbReference type="InterPro" id="IPR001560">
    <property type="entry name" value="Bombesin_rcpt_3"/>
</dbReference>
<dbReference type="InterPro" id="IPR001556">
    <property type="entry name" value="Bombsn_rcpt-like"/>
</dbReference>
<dbReference type="InterPro" id="IPR000276">
    <property type="entry name" value="GPCR_Rhodpsn"/>
</dbReference>
<dbReference type="InterPro" id="IPR017452">
    <property type="entry name" value="GPCR_Rhodpsn_7TM"/>
</dbReference>
<dbReference type="PANTHER" id="PTHR45695:SF6">
    <property type="entry name" value="BOMBESIN RECEPTOR SUBTYPE-3"/>
    <property type="match status" value="1"/>
</dbReference>
<dbReference type="PANTHER" id="PTHR45695">
    <property type="entry name" value="LEUCOKININ RECEPTOR-RELATED"/>
    <property type="match status" value="1"/>
</dbReference>
<dbReference type="Pfam" id="PF00001">
    <property type="entry name" value="7tm_1"/>
    <property type="match status" value="1"/>
</dbReference>
<dbReference type="PRINTS" id="PR00637">
    <property type="entry name" value="BOMBESIN3R"/>
</dbReference>
<dbReference type="PRINTS" id="PR00358">
    <property type="entry name" value="BOMBESINR"/>
</dbReference>
<dbReference type="PRINTS" id="PR00237">
    <property type="entry name" value="GPCRRHODOPSN"/>
</dbReference>
<dbReference type="SMART" id="SM01381">
    <property type="entry name" value="7TM_GPCR_Srsx"/>
    <property type="match status" value="1"/>
</dbReference>
<dbReference type="SUPFAM" id="SSF81321">
    <property type="entry name" value="Family A G protein-coupled receptor-like"/>
    <property type="match status" value="1"/>
</dbReference>
<dbReference type="PROSITE" id="PS00237">
    <property type="entry name" value="G_PROTEIN_RECEP_F1_1"/>
    <property type="match status" value="1"/>
</dbReference>
<dbReference type="PROSITE" id="PS50262">
    <property type="entry name" value="G_PROTEIN_RECEP_F1_2"/>
    <property type="match status" value="1"/>
</dbReference>
<feature type="chain" id="PRO_0000069199" description="Bombesin receptor subtype-3">
    <location>
        <begin position="1"/>
        <end position="399"/>
    </location>
</feature>
<feature type="topological domain" description="Extracellular" evidence="2">
    <location>
        <begin position="1"/>
        <end position="41"/>
    </location>
</feature>
<feature type="transmembrane region" description="Helical; Name=1" evidence="2">
    <location>
        <begin position="42"/>
        <end position="63"/>
    </location>
</feature>
<feature type="topological domain" description="Cytoplasmic" evidence="2">
    <location>
        <begin position="64"/>
        <end position="82"/>
    </location>
</feature>
<feature type="transmembrane region" description="Helical; Name=2" evidence="2">
    <location>
        <begin position="83"/>
        <end position="103"/>
    </location>
</feature>
<feature type="topological domain" description="Extracellular" evidence="2">
    <location>
        <begin position="104"/>
        <end position="121"/>
    </location>
</feature>
<feature type="transmembrane region" description="Helical; Name=3" evidence="2">
    <location>
        <begin position="122"/>
        <end position="143"/>
    </location>
</feature>
<feature type="topological domain" description="Cytoplasmic" evidence="2">
    <location>
        <begin position="144"/>
        <end position="163"/>
    </location>
</feature>
<feature type="transmembrane region" description="Helical; Name=4" evidence="2">
    <location>
        <begin position="164"/>
        <end position="184"/>
    </location>
</feature>
<feature type="topological domain" description="Extracellular" evidence="2">
    <location>
        <begin position="185"/>
        <end position="220"/>
    </location>
</feature>
<feature type="transmembrane region" description="Helical; Name=5" evidence="2">
    <location>
        <begin position="221"/>
        <end position="241"/>
    </location>
</feature>
<feature type="topological domain" description="Cytoplasmic" evidence="2">
    <location>
        <begin position="242"/>
        <end position="272"/>
    </location>
</feature>
<feature type="transmembrane region" description="Helical; Name=6" evidence="2">
    <location>
        <begin position="273"/>
        <end position="293"/>
    </location>
</feature>
<feature type="topological domain" description="Extracellular" evidence="2">
    <location>
        <begin position="294"/>
        <end position="313"/>
    </location>
</feature>
<feature type="transmembrane region" description="Helical; Name=7" evidence="2">
    <location>
        <begin position="314"/>
        <end position="333"/>
    </location>
</feature>
<feature type="topological domain" description="Cytoplasmic" evidence="2">
    <location>
        <begin position="334"/>
        <end position="399"/>
    </location>
</feature>
<feature type="region of interest" description="Disordered" evidence="4">
    <location>
        <begin position="1"/>
        <end position="38"/>
    </location>
</feature>
<feature type="compositionally biased region" description="Polar residues" evidence="4">
    <location>
        <begin position="1"/>
        <end position="31"/>
    </location>
</feature>
<feature type="glycosylation site" description="N-linked (GlcNAc...) asparagine" evidence="2">
    <location>
        <position position="10"/>
    </location>
</feature>
<feature type="glycosylation site" description="N-linked (GlcNAc...) asparagine" evidence="2">
    <location>
        <position position="18"/>
    </location>
</feature>
<feature type="glycosylation site" description="N-linked (GlcNAc...) asparagine" evidence="2">
    <location>
        <position position="29"/>
    </location>
</feature>
<feature type="disulfide bond" evidence="3">
    <location>
        <begin position="120"/>
        <end position="203"/>
    </location>
</feature>
<protein>
    <recommendedName>
        <fullName>Bombesin receptor subtype-3</fullName>
        <shortName>BRS-3</shortName>
    </recommendedName>
</protein>
<organism>
    <name type="scientific">Ovis aries</name>
    <name type="common">Sheep</name>
    <dbReference type="NCBI Taxonomy" id="9940"/>
    <lineage>
        <taxon>Eukaryota</taxon>
        <taxon>Metazoa</taxon>
        <taxon>Chordata</taxon>
        <taxon>Craniata</taxon>
        <taxon>Vertebrata</taxon>
        <taxon>Euteleostomi</taxon>
        <taxon>Mammalia</taxon>
        <taxon>Eutheria</taxon>
        <taxon>Laurasiatheria</taxon>
        <taxon>Artiodactyla</taxon>
        <taxon>Ruminantia</taxon>
        <taxon>Pecora</taxon>
        <taxon>Bovidae</taxon>
        <taxon>Caprinae</taxon>
        <taxon>Ovis</taxon>
    </lineage>
</organism>
<accession>O97967</accession>
<sequence>MSQRQPQSPNQTLISTTNDTESSSSVVPNDSTNKRRTGDNSPGIEALCAIYITYAVIISVGILGNAILIKVFFKTKSMQTVPNIFITSLAFGDLLLLLTCVPVDVTHYLAEGWLFGRIGCKVLSFIRLTSVGVSVFTLTILSADRYKAVVKPLERQPPNAILKTCAKAGCIWIMSMIIALPEAIFSNVYTFQDPDKNVTFKACASYPVSERLLQEIHSLLCFLVFYIIPLSIISVYYSLIARTLYKSTLNIPTEEQRHARKQIESRKRIAKTVLVLVALFALCWLPNHLLYLYRSFTSQTYMDSSTVHLFVTIISRILAFSNSCVNPFALYWLSNTFQQHFKAQLFCCKAGRPDPTAANTPLDNLAVMGRVPGAASTQMSEISVSPFTGCSVKKEDDRV</sequence>
<name>BRS3_SHEEP</name>
<proteinExistence type="evidence at transcript level"/>
<comment type="function">
    <text evidence="1">Role in sperm cell division, maturation, or function. This receptor mediates its action by association with G proteins that activate a phosphatidylinositol-calcium second messenger system (By similarity).</text>
</comment>
<comment type="subunit">
    <text evidence="1">Interacts with C6orf89.</text>
</comment>
<comment type="subcellular location">
    <subcellularLocation>
        <location>Cell membrane</location>
        <topology>Multi-pass membrane protein</topology>
    </subcellularLocation>
</comment>
<comment type="similarity">
    <text evidence="3">Belongs to the G-protein coupled receptor 1 family.</text>
</comment>
<gene>
    <name type="primary">BRS3</name>
</gene>